<evidence type="ECO:0000255" key="1">
    <source>
        <dbReference type="HAMAP-Rule" id="MF_01007"/>
    </source>
</evidence>
<reference key="1">
    <citation type="journal article" date="2007" name="PLoS Genet.">
        <title>Meningococcal genetic variation mechanisms viewed through comparative analysis of serogroup C strain FAM18.</title>
        <authorList>
            <person name="Bentley S.D."/>
            <person name="Vernikos G.S."/>
            <person name="Snyder L.A.S."/>
            <person name="Churcher C."/>
            <person name="Arrowsmith C."/>
            <person name="Chillingworth T."/>
            <person name="Cronin A."/>
            <person name="Davis P.H."/>
            <person name="Holroyd N.E."/>
            <person name="Jagels K."/>
            <person name="Maddison M."/>
            <person name="Moule S."/>
            <person name="Rabbinowitsch E."/>
            <person name="Sharp S."/>
            <person name="Unwin L."/>
            <person name="Whitehead S."/>
            <person name="Quail M.A."/>
            <person name="Achtman M."/>
            <person name="Barrell B.G."/>
            <person name="Saunders N.J."/>
            <person name="Parkhill J."/>
        </authorList>
    </citation>
    <scope>NUCLEOTIDE SEQUENCE [LARGE SCALE GENOMIC DNA]</scope>
    <source>
        <strain>ATCC 700532 / DSM 15464 / FAM18</strain>
    </source>
</reference>
<keyword id="KW-0963">Cytoplasm</keyword>
<keyword id="KW-0489">Methyltransferase</keyword>
<keyword id="KW-0698">rRNA processing</keyword>
<keyword id="KW-0949">S-adenosyl-L-methionine</keyword>
<keyword id="KW-0808">Transferase</keyword>
<proteinExistence type="inferred from homology"/>
<accession>A1KVM4</accession>
<name>RSMH_NEIMF</name>
<gene>
    <name evidence="1" type="primary">rsmH</name>
    <name type="synonym">mraW</name>
    <name type="ordered locus">NMC1755</name>
</gene>
<comment type="function">
    <text evidence="1">Specifically methylates the N4 position of cytidine in position 1402 (C1402) of 16S rRNA.</text>
</comment>
<comment type="catalytic activity">
    <reaction evidence="1">
        <text>cytidine(1402) in 16S rRNA + S-adenosyl-L-methionine = N(4)-methylcytidine(1402) in 16S rRNA + S-adenosyl-L-homocysteine + H(+)</text>
        <dbReference type="Rhea" id="RHEA:42928"/>
        <dbReference type="Rhea" id="RHEA-COMP:10286"/>
        <dbReference type="Rhea" id="RHEA-COMP:10287"/>
        <dbReference type="ChEBI" id="CHEBI:15378"/>
        <dbReference type="ChEBI" id="CHEBI:57856"/>
        <dbReference type="ChEBI" id="CHEBI:59789"/>
        <dbReference type="ChEBI" id="CHEBI:74506"/>
        <dbReference type="ChEBI" id="CHEBI:82748"/>
        <dbReference type="EC" id="2.1.1.199"/>
    </reaction>
</comment>
<comment type="subcellular location">
    <subcellularLocation>
        <location evidence="1">Cytoplasm</location>
    </subcellularLocation>
</comment>
<comment type="similarity">
    <text evidence="1">Belongs to the methyltransferase superfamily. RsmH family.</text>
</comment>
<protein>
    <recommendedName>
        <fullName evidence="1">Ribosomal RNA small subunit methyltransferase H</fullName>
        <ecNumber evidence="1">2.1.1.199</ecNumber>
    </recommendedName>
    <alternativeName>
        <fullName evidence="1">16S rRNA m(4)C1402 methyltransferase</fullName>
    </alternativeName>
    <alternativeName>
        <fullName evidence="1">rRNA (cytosine-N(4)-)-methyltransferase RsmH</fullName>
    </alternativeName>
</protein>
<feature type="chain" id="PRO_0000387006" description="Ribosomal RNA small subunit methyltransferase H">
    <location>
        <begin position="1"/>
        <end position="328"/>
    </location>
</feature>
<feature type="binding site" evidence="1">
    <location>
        <begin position="37"/>
        <end position="39"/>
    </location>
    <ligand>
        <name>S-adenosyl-L-methionine</name>
        <dbReference type="ChEBI" id="CHEBI:59789"/>
    </ligand>
</feature>
<feature type="binding site" evidence="1">
    <location>
        <position position="57"/>
    </location>
    <ligand>
        <name>S-adenosyl-L-methionine</name>
        <dbReference type="ChEBI" id="CHEBI:59789"/>
    </ligand>
</feature>
<feature type="binding site" evidence="1">
    <location>
        <position position="83"/>
    </location>
    <ligand>
        <name>S-adenosyl-L-methionine</name>
        <dbReference type="ChEBI" id="CHEBI:59789"/>
    </ligand>
</feature>
<feature type="binding site" evidence="1">
    <location>
        <position position="104"/>
    </location>
    <ligand>
        <name>S-adenosyl-L-methionine</name>
        <dbReference type="ChEBI" id="CHEBI:59789"/>
    </ligand>
</feature>
<feature type="binding site" evidence="1">
    <location>
        <position position="111"/>
    </location>
    <ligand>
        <name>S-adenosyl-L-methionine</name>
        <dbReference type="ChEBI" id="CHEBI:59789"/>
    </ligand>
</feature>
<sequence>MSGAESYRHITVLLNEAVDALAVREDGVYVDGTFGRGGHSRLILSRLGDAGRLIVFDKDPQAIAVAEELARSDKRVGVVHGGFASFQAALDGLGIGKVDGALFDLGISSPQIDDGSRGFSFRFDAPLDMRMDTTRGMSAAEWIAVASEQDLHEVIKNYGEERFSRQIARAIVAQRAESPIDTTRKLAQIVAQNVRTRERGQDPATRTFQAVRIFINRELEEVGAVLPQVMCRLKEGGRLAVIAFHSLEDRIVKQFVKKYSQHAPLPRWAAVREADLPELPLKIVGRALKPGEAEIAANPRARSAVLRVAERTAGPIPEQSQRKTSEWQ</sequence>
<dbReference type="EC" id="2.1.1.199" evidence="1"/>
<dbReference type="EMBL" id="AM421808">
    <property type="protein sequence ID" value="CAM10928.1"/>
    <property type="molecule type" value="Genomic_DNA"/>
</dbReference>
<dbReference type="RefSeq" id="WP_002220362.1">
    <property type="nucleotide sequence ID" value="NC_008767.1"/>
</dbReference>
<dbReference type="SMR" id="A1KVM4"/>
<dbReference type="KEGG" id="nmc:NMC1755"/>
<dbReference type="HOGENOM" id="CLU_038422_2_0_4"/>
<dbReference type="Proteomes" id="UP000002286">
    <property type="component" value="Chromosome"/>
</dbReference>
<dbReference type="GO" id="GO:0005737">
    <property type="term" value="C:cytoplasm"/>
    <property type="evidence" value="ECO:0007669"/>
    <property type="project" value="UniProtKB-SubCell"/>
</dbReference>
<dbReference type="GO" id="GO:0071424">
    <property type="term" value="F:rRNA (cytosine-N4-)-methyltransferase activity"/>
    <property type="evidence" value="ECO:0007669"/>
    <property type="project" value="UniProtKB-UniRule"/>
</dbReference>
<dbReference type="GO" id="GO:0070475">
    <property type="term" value="P:rRNA base methylation"/>
    <property type="evidence" value="ECO:0007669"/>
    <property type="project" value="UniProtKB-UniRule"/>
</dbReference>
<dbReference type="FunFam" id="1.10.150.170:FF:000001">
    <property type="entry name" value="Ribosomal RNA small subunit methyltransferase H"/>
    <property type="match status" value="1"/>
</dbReference>
<dbReference type="Gene3D" id="1.10.150.170">
    <property type="entry name" value="Putative methyltransferase TM0872, insert domain"/>
    <property type="match status" value="1"/>
</dbReference>
<dbReference type="Gene3D" id="3.40.50.150">
    <property type="entry name" value="Vaccinia Virus protein VP39"/>
    <property type="match status" value="1"/>
</dbReference>
<dbReference type="HAMAP" id="MF_01007">
    <property type="entry name" value="16SrRNA_methyltr_H"/>
    <property type="match status" value="1"/>
</dbReference>
<dbReference type="InterPro" id="IPR002903">
    <property type="entry name" value="RsmH"/>
</dbReference>
<dbReference type="InterPro" id="IPR023397">
    <property type="entry name" value="SAM-dep_MeTrfase_MraW_recog"/>
</dbReference>
<dbReference type="InterPro" id="IPR029063">
    <property type="entry name" value="SAM-dependent_MTases_sf"/>
</dbReference>
<dbReference type="NCBIfam" id="TIGR00006">
    <property type="entry name" value="16S rRNA (cytosine(1402)-N(4))-methyltransferase RsmH"/>
    <property type="match status" value="1"/>
</dbReference>
<dbReference type="PANTHER" id="PTHR11265:SF0">
    <property type="entry name" value="12S RRNA N4-METHYLCYTIDINE METHYLTRANSFERASE"/>
    <property type="match status" value="1"/>
</dbReference>
<dbReference type="PANTHER" id="PTHR11265">
    <property type="entry name" value="S-ADENOSYL-METHYLTRANSFERASE MRAW"/>
    <property type="match status" value="1"/>
</dbReference>
<dbReference type="Pfam" id="PF01795">
    <property type="entry name" value="Methyltransf_5"/>
    <property type="match status" value="1"/>
</dbReference>
<dbReference type="PIRSF" id="PIRSF004486">
    <property type="entry name" value="MraW"/>
    <property type="match status" value="1"/>
</dbReference>
<dbReference type="SUPFAM" id="SSF81799">
    <property type="entry name" value="Putative methyltransferase TM0872, insert domain"/>
    <property type="match status" value="1"/>
</dbReference>
<dbReference type="SUPFAM" id="SSF53335">
    <property type="entry name" value="S-adenosyl-L-methionine-dependent methyltransferases"/>
    <property type="match status" value="1"/>
</dbReference>
<organism>
    <name type="scientific">Neisseria meningitidis serogroup C / serotype 2a (strain ATCC 700532 / DSM 15464 / FAM18)</name>
    <dbReference type="NCBI Taxonomy" id="272831"/>
    <lineage>
        <taxon>Bacteria</taxon>
        <taxon>Pseudomonadati</taxon>
        <taxon>Pseudomonadota</taxon>
        <taxon>Betaproteobacteria</taxon>
        <taxon>Neisseriales</taxon>
        <taxon>Neisseriaceae</taxon>
        <taxon>Neisseria</taxon>
    </lineage>
</organism>